<accession>A9VFW9</accession>
<sequence>MIKLVLIRHGQSLWNLENRFTGWTDVDLSKNGLSEAREAGTILKKNGYTFDVAYTSVLKRAIRTLWIVLHEMDLTWVPIHNSWKLNERHYGALQGLNKDETAKKYGDEQVHIWRRSIDVRPPALTEDDPRYEANNPRYKTLKKDEFPLTECLEDTEKRVVDYWHSEIVPSLKSGEKVIISSHGNTIRSLVKYLDNLSSDGVVSLNIPTSIPLVYELDEKLRPIRHYYLSMDGEVPEGEIPKHISF</sequence>
<name>GPMA_BACMK</name>
<feature type="chain" id="PRO_1000135919" description="2,3-bisphosphoglycerate-dependent phosphoglycerate mutase">
    <location>
        <begin position="1"/>
        <end position="245"/>
    </location>
</feature>
<feature type="active site" description="Tele-phosphohistidine intermediate" evidence="1">
    <location>
        <position position="9"/>
    </location>
</feature>
<feature type="active site" description="Proton donor/acceptor" evidence="1">
    <location>
        <position position="87"/>
    </location>
</feature>
<feature type="binding site" evidence="1">
    <location>
        <begin position="8"/>
        <end position="15"/>
    </location>
    <ligand>
        <name>substrate</name>
    </ligand>
</feature>
<feature type="binding site" evidence="1">
    <location>
        <begin position="21"/>
        <end position="22"/>
    </location>
    <ligand>
        <name>substrate</name>
    </ligand>
</feature>
<feature type="binding site" evidence="1">
    <location>
        <position position="60"/>
    </location>
    <ligand>
        <name>substrate</name>
    </ligand>
</feature>
<feature type="binding site" evidence="1">
    <location>
        <begin position="87"/>
        <end position="90"/>
    </location>
    <ligand>
        <name>substrate</name>
    </ligand>
</feature>
<feature type="binding site" evidence="1">
    <location>
        <position position="98"/>
    </location>
    <ligand>
        <name>substrate</name>
    </ligand>
</feature>
<feature type="binding site" evidence="1">
    <location>
        <begin position="114"/>
        <end position="115"/>
    </location>
    <ligand>
        <name>substrate</name>
    </ligand>
</feature>
<feature type="binding site" evidence="1">
    <location>
        <begin position="183"/>
        <end position="184"/>
    </location>
    <ligand>
        <name>substrate</name>
    </ligand>
</feature>
<feature type="site" description="Transition state stabilizer" evidence="1">
    <location>
        <position position="182"/>
    </location>
</feature>
<keyword id="KW-0312">Gluconeogenesis</keyword>
<keyword id="KW-0324">Glycolysis</keyword>
<keyword id="KW-0413">Isomerase</keyword>
<evidence type="ECO:0000255" key="1">
    <source>
        <dbReference type="HAMAP-Rule" id="MF_01039"/>
    </source>
</evidence>
<comment type="function">
    <text evidence="1">Catalyzes the interconversion of 2-phosphoglycerate and 3-phosphoglycerate.</text>
</comment>
<comment type="catalytic activity">
    <reaction evidence="1">
        <text>(2R)-2-phosphoglycerate = (2R)-3-phosphoglycerate</text>
        <dbReference type="Rhea" id="RHEA:15901"/>
        <dbReference type="ChEBI" id="CHEBI:58272"/>
        <dbReference type="ChEBI" id="CHEBI:58289"/>
        <dbReference type="EC" id="5.4.2.11"/>
    </reaction>
</comment>
<comment type="pathway">
    <text evidence="1">Carbohydrate degradation; glycolysis; pyruvate from D-glyceraldehyde 3-phosphate: step 3/5.</text>
</comment>
<comment type="similarity">
    <text evidence="1">Belongs to the phosphoglycerate mutase family. BPG-dependent PGAM subfamily.</text>
</comment>
<reference key="1">
    <citation type="journal article" date="2008" name="Chem. Biol. Interact.">
        <title>Extending the Bacillus cereus group genomics to putative food-borne pathogens of different toxicity.</title>
        <authorList>
            <person name="Lapidus A."/>
            <person name="Goltsman E."/>
            <person name="Auger S."/>
            <person name="Galleron N."/>
            <person name="Segurens B."/>
            <person name="Dossat C."/>
            <person name="Land M.L."/>
            <person name="Broussolle V."/>
            <person name="Brillard J."/>
            <person name="Guinebretiere M.-H."/>
            <person name="Sanchis V."/>
            <person name="Nguen-the C."/>
            <person name="Lereclus D."/>
            <person name="Richardson P."/>
            <person name="Wincker P."/>
            <person name="Weissenbach J."/>
            <person name="Ehrlich S.D."/>
            <person name="Sorokin A."/>
        </authorList>
    </citation>
    <scope>NUCLEOTIDE SEQUENCE [LARGE SCALE GENOMIC DNA]</scope>
    <source>
        <strain>KBAB4</strain>
    </source>
</reference>
<organism>
    <name type="scientific">Bacillus mycoides (strain KBAB4)</name>
    <name type="common">Bacillus weihenstephanensis</name>
    <dbReference type="NCBI Taxonomy" id="315730"/>
    <lineage>
        <taxon>Bacteria</taxon>
        <taxon>Bacillati</taxon>
        <taxon>Bacillota</taxon>
        <taxon>Bacilli</taxon>
        <taxon>Bacillales</taxon>
        <taxon>Bacillaceae</taxon>
        <taxon>Bacillus</taxon>
        <taxon>Bacillus cereus group</taxon>
    </lineage>
</organism>
<dbReference type="EC" id="5.4.2.11" evidence="1"/>
<dbReference type="EMBL" id="CP000903">
    <property type="protein sequence ID" value="ABY43510.1"/>
    <property type="molecule type" value="Genomic_DNA"/>
</dbReference>
<dbReference type="RefSeq" id="WP_002141781.1">
    <property type="nucleotide sequence ID" value="NC_010184.1"/>
</dbReference>
<dbReference type="SMR" id="A9VFW9"/>
<dbReference type="KEGG" id="bwe:BcerKBAB4_2293"/>
<dbReference type="eggNOG" id="COG0588">
    <property type="taxonomic scope" value="Bacteria"/>
</dbReference>
<dbReference type="HOGENOM" id="CLU_033323_1_1_9"/>
<dbReference type="UniPathway" id="UPA00109">
    <property type="reaction ID" value="UER00186"/>
</dbReference>
<dbReference type="Proteomes" id="UP000002154">
    <property type="component" value="Chromosome"/>
</dbReference>
<dbReference type="GO" id="GO:0004619">
    <property type="term" value="F:phosphoglycerate mutase activity"/>
    <property type="evidence" value="ECO:0007669"/>
    <property type="project" value="UniProtKB-EC"/>
</dbReference>
<dbReference type="GO" id="GO:0006094">
    <property type="term" value="P:gluconeogenesis"/>
    <property type="evidence" value="ECO:0007669"/>
    <property type="project" value="UniProtKB-UniRule"/>
</dbReference>
<dbReference type="GO" id="GO:0006096">
    <property type="term" value="P:glycolytic process"/>
    <property type="evidence" value="ECO:0007669"/>
    <property type="project" value="UniProtKB-UniRule"/>
</dbReference>
<dbReference type="CDD" id="cd07067">
    <property type="entry name" value="HP_PGM_like"/>
    <property type="match status" value="1"/>
</dbReference>
<dbReference type="FunFam" id="3.40.50.1240:FF:000003">
    <property type="entry name" value="2,3-bisphosphoglycerate-dependent phosphoglycerate mutase"/>
    <property type="match status" value="1"/>
</dbReference>
<dbReference type="Gene3D" id="3.40.50.1240">
    <property type="entry name" value="Phosphoglycerate mutase-like"/>
    <property type="match status" value="1"/>
</dbReference>
<dbReference type="HAMAP" id="MF_01039">
    <property type="entry name" value="PGAM_GpmA"/>
    <property type="match status" value="1"/>
</dbReference>
<dbReference type="InterPro" id="IPR013078">
    <property type="entry name" value="His_Pase_superF_clade-1"/>
</dbReference>
<dbReference type="InterPro" id="IPR029033">
    <property type="entry name" value="His_PPase_superfam"/>
</dbReference>
<dbReference type="InterPro" id="IPR001345">
    <property type="entry name" value="PG/BPGM_mutase_AS"/>
</dbReference>
<dbReference type="InterPro" id="IPR005952">
    <property type="entry name" value="Phosphogly_mut1"/>
</dbReference>
<dbReference type="NCBIfam" id="TIGR01258">
    <property type="entry name" value="pgm_1"/>
    <property type="match status" value="1"/>
</dbReference>
<dbReference type="NCBIfam" id="NF010713">
    <property type="entry name" value="PRK14115.1"/>
    <property type="match status" value="1"/>
</dbReference>
<dbReference type="PANTHER" id="PTHR11931">
    <property type="entry name" value="PHOSPHOGLYCERATE MUTASE"/>
    <property type="match status" value="1"/>
</dbReference>
<dbReference type="Pfam" id="PF00300">
    <property type="entry name" value="His_Phos_1"/>
    <property type="match status" value="1"/>
</dbReference>
<dbReference type="PIRSF" id="PIRSF000709">
    <property type="entry name" value="6PFK_2-Ptase"/>
    <property type="match status" value="1"/>
</dbReference>
<dbReference type="SMART" id="SM00855">
    <property type="entry name" value="PGAM"/>
    <property type="match status" value="1"/>
</dbReference>
<dbReference type="SUPFAM" id="SSF53254">
    <property type="entry name" value="Phosphoglycerate mutase-like"/>
    <property type="match status" value="1"/>
</dbReference>
<dbReference type="PROSITE" id="PS00175">
    <property type="entry name" value="PG_MUTASE"/>
    <property type="match status" value="1"/>
</dbReference>
<proteinExistence type="inferred from homology"/>
<protein>
    <recommendedName>
        <fullName evidence="1">2,3-bisphosphoglycerate-dependent phosphoglycerate mutase</fullName>
        <shortName evidence="1">BPG-dependent PGAM</shortName>
        <shortName evidence="1">PGAM</shortName>
        <shortName evidence="1">Phosphoglyceromutase</shortName>
        <shortName evidence="1">dPGM</shortName>
        <ecNumber evidence="1">5.4.2.11</ecNumber>
    </recommendedName>
</protein>
<gene>
    <name evidence="1" type="primary">gpmA</name>
    <name type="ordered locus">BcerKBAB4_2293</name>
</gene>